<sequence length="490" mass="54795">MSTAKWETVIGLEVHVELSTETKIWCGCKNEFGAEPNTNVCPVCLALPGALPVLNYKAVEYTIRAGLALNCKIQRHSKFDRKNYFYADLPSGYQISQFDLPLCYDGYVDITKKDGTTRRIRIKRIHLETDAGKLLHAGDDVAAADYSLVDFNRAGVPLIEIVTEPDLRSAEEAGLFLQKLRTILKYSGVSDVKMEEGSMRCDVNLSVRPAGSSEYGVRTELKNVNSFSAVMRGIEYEEKRHIRILEEGGQPEQETRSWRDAQGISVLLRSKEDAEDYRYFPEPDLPPLEVSAEEIERIRAGLPELPDALMQRLMTEYGLSAYDASVIVAEREYAQWFLHAVELAGAGQAKTVANWQINELYRVMNEKGLGPEQIPVTPEQLVGMLKLIEQGTITGKIAKTVFDKMVETGKDAETIVKEEGLTQVADEGELLAIAREVVASNPKVFEDWKAGKQSAAQWFVGQIMKRTRGRANPQMALKLVTQALEEQAQK</sequence>
<evidence type="ECO:0000255" key="1">
    <source>
        <dbReference type="HAMAP-Rule" id="MF_00121"/>
    </source>
</evidence>
<dbReference type="EC" id="6.3.5.-" evidence="1"/>
<dbReference type="EMBL" id="AP006840">
    <property type="protein sequence ID" value="BAD41805.1"/>
    <property type="molecule type" value="Genomic_DNA"/>
</dbReference>
<dbReference type="RefSeq" id="WP_011196939.1">
    <property type="nucleotide sequence ID" value="NC_006177.1"/>
</dbReference>
<dbReference type="SMR" id="Q67KJ3"/>
<dbReference type="STRING" id="292459.STH2820"/>
<dbReference type="KEGG" id="sth:STH2820"/>
<dbReference type="eggNOG" id="COG0064">
    <property type="taxonomic scope" value="Bacteria"/>
</dbReference>
<dbReference type="HOGENOM" id="CLU_019240_0_0_9"/>
<dbReference type="OrthoDB" id="9804078at2"/>
<dbReference type="Proteomes" id="UP000000417">
    <property type="component" value="Chromosome"/>
</dbReference>
<dbReference type="GO" id="GO:0050566">
    <property type="term" value="F:asparaginyl-tRNA synthase (glutamine-hydrolyzing) activity"/>
    <property type="evidence" value="ECO:0007669"/>
    <property type="project" value="RHEA"/>
</dbReference>
<dbReference type="GO" id="GO:0005524">
    <property type="term" value="F:ATP binding"/>
    <property type="evidence" value="ECO:0007669"/>
    <property type="project" value="UniProtKB-KW"/>
</dbReference>
<dbReference type="GO" id="GO:0050567">
    <property type="term" value="F:glutaminyl-tRNA synthase (glutamine-hydrolyzing) activity"/>
    <property type="evidence" value="ECO:0007669"/>
    <property type="project" value="UniProtKB-UniRule"/>
</dbReference>
<dbReference type="GO" id="GO:0070681">
    <property type="term" value="P:glutaminyl-tRNAGln biosynthesis via transamidation"/>
    <property type="evidence" value="ECO:0007669"/>
    <property type="project" value="TreeGrafter"/>
</dbReference>
<dbReference type="GO" id="GO:0006412">
    <property type="term" value="P:translation"/>
    <property type="evidence" value="ECO:0007669"/>
    <property type="project" value="UniProtKB-UniRule"/>
</dbReference>
<dbReference type="FunFam" id="1.10.10.410:FF:000001">
    <property type="entry name" value="Aspartyl/glutamyl-tRNA(Asn/Gln) amidotransferase subunit B"/>
    <property type="match status" value="1"/>
</dbReference>
<dbReference type="Gene3D" id="1.10.10.410">
    <property type="match status" value="1"/>
</dbReference>
<dbReference type="Gene3D" id="1.10.150.380">
    <property type="entry name" value="GatB domain, N-terminal subdomain"/>
    <property type="match status" value="1"/>
</dbReference>
<dbReference type="HAMAP" id="MF_00121">
    <property type="entry name" value="GatB"/>
    <property type="match status" value="1"/>
</dbReference>
<dbReference type="InterPro" id="IPR017959">
    <property type="entry name" value="Asn/Gln-tRNA_amidoTrfase_suB/E"/>
</dbReference>
<dbReference type="InterPro" id="IPR006075">
    <property type="entry name" value="Asn/Gln-tRNA_Trfase_suB/E_cat"/>
</dbReference>
<dbReference type="InterPro" id="IPR018027">
    <property type="entry name" value="Asn/Gln_amidotransferase"/>
</dbReference>
<dbReference type="InterPro" id="IPR003789">
    <property type="entry name" value="Asn/Gln_tRNA_amidoTrase-B-like"/>
</dbReference>
<dbReference type="InterPro" id="IPR004413">
    <property type="entry name" value="GatB"/>
</dbReference>
<dbReference type="InterPro" id="IPR042114">
    <property type="entry name" value="GatB_C_1"/>
</dbReference>
<dbReference type="InterPro" id="IPR023168">
    <property type="entry name" value="GatB_Yqey_C_2"/>
</dbReference>
<dbReference type="InterPro" id="IPR017958">
    <property type="entry name" value="Gln-tRNA_amidoTrfase_suB_CS"/>
</dbReference>
<dbReference type="InterPro" id="IPR014746">
    <property type="entry name" value="Gln_synth/guanido_kin_cat_dom"/>
</dbReference>
<dbReference type="NCBIfam" id="TIGR00133">
    <property type="entry name" value="gatB"/>
    <property type="match status" value="1"/>
</dbReference>
<dbReference type="NCBIfam" id="NF004012">
    <property type="entry name" value="PRK05477.1-2"/>
    <property type="match status" value="1"/>
</dbReference>
<dbReference type="NCBIfam" id="NF004014">
    <property type="entry name" value="PRK05477.1-4"/>
    <property type="match status" value="1"/>
</dbReference>
<dbReference type="PANTHER" id="PTHR11659">
    <property type="entry name" value="GLUTAMYL-TRNA GLN AMIDOTRANSFERASE SUBUNIT B MITOCHONDRIAL AND PROKARYOTIC PET112-RELATED"/>
    <property type="match status" value="1"/>
</dbReference>
<dbReference type="PANTHER" id="PTHR11659:SF0">
    <property type="entry name" value="GLUTAMYL-TRNA(GLN) AMIDOTRANSFERASE SUBUNIT B, MITOCHONDRIAL"/>
    <property type="match status" value="1"/>
</dbReference>
<dbReference type="Pfam" id="PF02934">
    <property type="entry name" value="GatB_N"/>
    <property type="match status" value="1"/>
</dbReference>
<dbReference type="Pfam" id="PF02637">
    <property type="entry name" value="GatB_Yqey"/>
    <property type="match status" value="1"/>
</dbReference>
<dbReference type="SMART" id="SM00845">
    <property type="entry name" value="GatB_Yqey"/>
    <property type="match status" value="1"/>
</dbReference>
<dbReference type="SUPFAM" id="SSF89095">
    <property type="entry name" value="GatB/YqeY motif"/>
    <property type="match status" value="1"/>
</dbReference>
<dbReference type="SUPFAM" id="SSF55931">
    <property type="entry name" value="Glutamine synthetase/guanido kinase"/>
    <property type="match status" value="1"/>
</dbReference>
<dbReference type="PROSITE" id="PS01234">
    <property type="entry name" value="GATB"/>
    <property type="match status" value="1"/>
</dbReference>
<protein>
    <recommendedName>
        <fullName evidence="1">Aspartyl/glutamyl-tRNA(Asn/Gln) amidotransferase subunit B</fullName>
        <shortName evidence="1">Asp/Glu-ADT subunit B</shortName>
        <ecNumber evidence="1">6.3.5.-</ecNumber>
    </recommendedName>
</protein>
<keyword id="KW-0067">ATP-binding</keyword>
<keyword id="KW-0436">Ligase</keyword>
<keyword id="KW-0547">Nucleotide-binding</keyword>
<keyword id="KW-0648">Protein biosynthesis</keyword>
<keyword id="KW-1185">Reference proteome</keyword>
<name>GATB_SYMTH</name>
<reference key="1">
    <citation type="journal article" date="2004" name="Nucleic Acids Res.">
        <title>Genome sequence of Symbiobacterium thermophilum, an uncultivable bacterium that depends on microbial commensalism.</title>
        <authorList>
            <person name="Ueda K."/>
            <person name="Yamashita A."/>
            <person name="Ishikawa J."/>
            <person name="Shimada M."/>
            <person name="Watsuji T."/>
            <person name="Morimura K."/>
            <person name="Ikeda H."/>
            <person name="Hattori M."/>
            <person name="Beppu T."/>
        </authorList>
    </citation>
    <scope>NUCLEOTIDE SEQUENCE [LARGE SCALE GENOMIC DNA]</scope>
    <source>
        <strain>DSM 24528 / JCM 14929 / IAM 14863 / T</strain>
    </source>
</reference>
<proteinExistence type="inferred from homology"/>
<accession>Q67KJ3</accession>
<gene>
    <name evidence="1" type="primary">gatB</name>
    <name type="ordered locus">STH2820</name>
</gene>
<feature type="chain" id="PRO_0000241284" description="Aspartyl/glutamyl-tRNA(Asn/Gln) amidotransferase subunit B">
    <location>
        <begin position="1"/>
        <end position="490"/>
    </location>
</feature>
<comment type="function">
    <text evidence="1">Allows the formation of correctly charged Asn-tRNA(Asn) or Gln-tRNA(Gln) through the transamidation of misacylated Asp-tRNA(Asn) or Glu-tRNA(Gln) in organisms which lack either or both of asparaginyl-tRNA or glutaminyl-tRNA synthetases. The reaction takes place in the presence of glutamine and ATP through an activated phospho-Asp-tRNA(Asn) or phospho-Glu-tRNA(Gln).</text>
</comment>
<comment type="catalytic activity">
    <reaction evidence="1">
        <text>L-glutamyl-tRNA(Gln) + L-glutamine + ATP + H2O = L-glutaminyl-tRNA(Gln) + L-glutamate + ADP + phosphate + H(+)</text>
        <dbReference type="Rhea" id="RHEA:17521"/>
        <dbReference type="Rhea" id="RHEA-COMP:9681"/>
        <dbReference type="Rhea" id="RHEA-COMP:9684"/>
        <dbReference type="ChEBI" id="CHEBI:15377"/>
        <dbReference type="ChEBI" id="CHEBI:15378"/>
        <dbReference type="ChEBI" id="CHEBI:29985"/>
        <dbReference type="ChEBI" id="CHEBI:30616"/>
        <dbReference type="ChEBI" id="CHEBI:43474"/>
        <dbReference type="ChEBI" id="CHEBI:58359"/>
        <dbReference type="ChEBI" id="CHEBI:78520"/>
        <dbReference type="ChEBI" id="CHEBI:78521"/>
        <dbReference type="ChEBI" id="CHEBI:456216"/>
    </reaction>
</comment>
<comment type="catalytic activity">
    <reaction evidence="1">
        <text>L-aspartyl-tRNA(Asn) + L-glutamine + ATP + H2O = L-asparaginyl-tRNA(Asn) + L-glutamate + ADP + phosphate + 2 H(+)</text>
        <dbReference type="Rhea" id="RHEA:14513"/>
        <dbReference type="Rhea" id="RHEA-COMP:9674"/>
        <dbReference type="Rhea" id="RHEA-COMP:9677"/>
        <dbReference type="ChEBI" id="CHEBI:15377"/>
        <dbReference type="ChEBI" id="CHEBI:15378"/>
        <dbReference type="ChEBI" id="CHEBI:29985"/>
        <dbReference type="ChEBI" id="CHEBI:30616"/>
        <dbReference type="ChEBI" id="CHEBI:43474"/>
        <dbReference type="ChEBI" id="CHEBI:58359"/>
        <dbReference type="ChEBI" id="CHEBI:78515"/>
        <dbReference type="ChEBI" id="CHEBI:78516"/>
        <dbReference type="ChEBI" id="CHEBI:456216"/>
    </reaction>
</comment>
<comment type="subunit">
    <text evidence="1">Heterotrimer of A, B and C subunits.</text>
</comment>
<comment type="similarity">
    <text evidence="1">Belongs to the GatB/GatE family. GatB subfamily.</text>
</comment>
<organism>
    <name type="scientific">Symbiobacterium thermophilum (strain DSM 24528 / JCM 14929 / IAM 14863 / T)</name>
    <dbReference type="NCBI Taxonomy" id="292459"/>
    <lineage>
        <taxon>Bacteria</taxon>
        <taxon>Bacillati</taxon>
        <taxon>Bacillota</taxon>
        <taxon>Clostridia</taxon>
        <taxon>Eubacteriales</taxon>
        <taxon>Symbiobacteriaceae</taxon>
        <taxon>Symbiobacterium</taxon>
    </lineage>
</organism>